<dbReference type="EC" id="3.1.3.3" evidence="1"/>
<dbReference type="EMBL" id="AK088865">
    <property type="protein sequence ID" value="BAC40622.1"/>
    <property type="molecule type" value="mRNA"/>
</dbReference>
<dbReference type="EMBL" id="AK168048">
    <property type="protein sequence ID" value="BAE40030.1"/>
    <property type="molecule type" value="mRNA"/>
</dbReference>
<dbReference type="EMBL" id="BC002251">
    <property type="protein sequence ID" value="AAH02251.1"/>
    <property type="molecule type" value="mRNA"/>
</dbReference>
<dbReference type="CCDS" id="CCDS19699.1"/>
<dbReference type="RefSeq" id="NP_598661.1">
    <property type="nucleotide sequence ID" value="NM_133900.4"/>
</dbReference>
<dbReference type="RefSeq" id="XP_006504337.1">
    <property type="nucleotide sequence ID" value="XM_006504274.5"/>
</dbReference>
<dbReference type="RefSeq" id="XP_017176063.1">
    <property type="nucleotide sequence ID" value="XM_017320574.1"/>
</dbReference>
<dbReference type="RefSeq" id="XP_030109871.1">
    <property type="nucleotide sequence ID" value="XM_030254011.1"/>
</dbReference>
<dbReference type="RefSeq" id="XP_030109872.1">
    <property type="nucleotide sequence ID" value="XM_030254012.2"/>
</dbReference>
<dbReference type="RefSeq" id="XP_030109873.1">
    <property type="nucleotide sequence ID" value="XM_030254013.2"/>
</dbReference>
<dbReference type="RefSeq" id="XP_036020582.1">
    <property type="nucleotide sequence ID" value="XM_036164689.1"/>
</dbReference>
<dbReference type="SMR" id="Q99LS3"/>
<dbReference type="BioGRID" id="221509">
    <property type="interactions" value="4"/>
</dbReference>
<dbReference type="FunCoup" id="Q99LS3">
    <property type="interactions" value="647"/>
</dbReference>
<dbReference type="IntAct" id="Q99LS3">
    <property type="interactions" value="1"/>
</dbReference>
<dbReference type="MINT" id="Q99LS3"/>
<dbReference type="STRING" id="10090.ENSMUSP00000031399"/>
<dbReference type="GlyGen" id="Q99LS3">
    <property type="glycosylation" value="1 site, 1 O-linked glycan (1 site)"/>
</dbReference>
<dbReference type="iPTMnet" id="Q99LS3"/>
<dbReference type="PhosphoSitePlus" id="Q99LS3"/>
<dbReference type="SwissPalm" id="Q99LS3"/>
<dbReference type="PaxDb" id="10090-ENSMUSP00000031399"/>
<dbReference type="PeptideAtlas" id="Q99LS3"/>
<dbReference type="ProteomicsDB" id="256780"/>
<dbReference type="Pumba" id="Q99LS3"/>
<dbReference type="Antibodypedia" id="13863">
    <property type="antibodies" value="343 antibodies from 32 providers"/>
</dbReference>
<dbReference type="DNASU" id="100678"/>
<dbReference type="Ensembl" id="ENSMUST00000031399.13">
    <property type="protein sequence ID" value="ENSMUSP00000031399.7"/>
    <property type="gene ID" value="ENSMUSG00000029446.15"/>
</dbReference>
<dbReference type="GeneID" id="100678"/>
<dbReference type="KEGG" id="mmu:100678"/>
<dbReference type="UCSC" id="uc008zth.2">
    <property type="organism name" value="mouse"/>
</dbReference>
<dbReference type="AGR" id="MGI:97788"/>
<dbReference type="CTD" id="5723"/>
<dbReference type="MGI" id="MGI:97788">
    <property type="gene designation" value="Psph"/>
</dbReference>
<dbReference type="VEuPathDB" id="HostDB:ENSMUSG00000029446"/>
<dbReference type="eggNOG" id="KOG1615">
    <property type="taxonomic scope" value="Eukaryota"/>
</dbReference>
<dbReference type="GeneTree" id="ENSGT00390000003115"/>
<dbReference type="HOGENOM" id="CLU_036368_2_1_1"/>
<dbReference type="InParanoid" id="Q99LS3"/>
<dbReference type="OMA" id="ANYFIGF"/>
<dbReference type="OrthoDB" id="27226at2759"/>
<dbReference type="PhylomeDB" id="Q99LS3"/>
<dbReference type="TreeFam" id="TF315024"/>
<dbReference type="BRENDA" id="3.1.3.3">
    <property type="organism ID" value="3474"/>
</dbReference>
<dbReference type="Reactome" id="R-MMU-977347">
    <property type="pathway name" value="Serine biosynthesis"/>
</dbReference>
<dbReference type="UniPathway" id="UPA00135">
    <property type="reaction ID" value="UER00198"/>
</dbReference>
<dbReference type="BioGRID-ORCS" id="100678">
    <property type="hits" value="2 hits in 83 CRISPR screens"/>
</dbReference>
<dbReference type="ChiTaRS" id="Psph">
    <property type="organism name" value="mouse"/>
</dbReference>
<dbReference type="PRO" id="PR:Q99LS3"/>
<dbReference type="Proteomes" id="UP000000589">
    <property type="component" value="Chromosome 5"/>
</dbReference>
<dbReference type="RNAct" id="Q99LS3">
    <property type="molecule type" value="protein"/>
</dbReference>
<dbReference type="Bgee" id="ENSMUSG00000029446">
    <property type="expression patterns" value="Expressed in seminal vesicle and 283 other cell types or tissues"/>
</dbReference>
<dbReference type="ExpressionAtlas" id="Q99LS3">
    <property type="expression patterns" value="baseline and differential"/>
</dbReference>
<dbReference type="GO" id="GO:0005829">
    <property type="term" value="C:cytosol"/>
    <property type="evidence" value="ECO:0007669"/>
    <property type="project" value="UniProtKB-SubCell"/>
</dbReference>
<dbReference type="GO" id="GO:0036424">
    <property type="term" value="F:L-phosphoserine phosphatase activity"/>
    <property type="evidence" value="ECO:0000250"/>
    <property type="project" value="UniProtKB"/>
</dbReference>
<dbReference type="GO" id="GO:0000287">
    <property type="term" value="F:magnesium ion binding"/>
    <property type="evidence" value="ECO:0000250"/>
    <property type="project" value="UniProtKB"/>
</dbReference>
<dbReference type="GO" id="GO:0042803">
    <property type="term" value="F:protein homodimerization activity"/>
    <property type="evidence" value="ECO:0007669"/>
    <property type="project" value="Ensembl"/>
</dbReference>
<dbReference type="GO" id="GO:0001701">
    <property type="term" value="P:in utero embryonic development"/>
    <property type="evidence" value="ECO:0000315"/>
    <property type="project" value="MGI"/>
</dbReference>
<dbReference type="GO" id="GO:0006564">
    <property type="term" value="P:L-serine biosynthetic process"/>
    <property type="evidence" value="ECO:0000250"/>
    <property type="project" value="UniProtKB"/>
</dbReference>
<dbReference type="GO" id="GO:0006563">
    <property type="term" value="P:L-serine metabolic process"/>
    <property type="evidence" value="ECO:0000250"/>
    <property type="project" value="UniProtKB"/>
</dbReference>
<dbReference type="GO" id="GO:0009612">
    <property type="term" value="P:response to mechanical stimulus"/>
    <property type="evidence" value="ECO:0007669"/>
    <property type="project" value="Ensembl"/>
</dbReference>
<dbReference type="GO" id="GO:0031667">
    <property type="term" value="P:response to nutrient levels"/>
    <property type="evidence" value="ECO:0007669"/>
    <property type="project" value="Ensembl"/>
</dbReference>
<dbReference type="GO" id="GO:0033574">
    <property type="term" value="P:response to testosterone"/>
    <property type="evidence" value="ECO:0007669"/>
    <property type="project" value="Ensembl"/>
</dbReference>
<dbReference type="CDD" id="cd04309">
    <property type="entry name" value="HAD_PSP_eu"/>
    <property type="match status" value="1"/>
</dbReference>
<dbReference type="FunFam" id="3.40.50.1000:FF:000077">
    <property type="entry name" value="Phosphoserine phosphatase, chloroplastic"/>
    <property type="match status" value="1"/>
</dbReference>
<dbReference type="FunFam" id="3.40.50.1000:FF:000114">
    <property type="entry name" value="Phosphoserine phosphatase, chloroplastic"/>
    <property type="match status" value="1"/>
</dbReference>
<dbReference type="Gene3D" id="3.40.50.1000">
    <property type="entry name" value="HAD superfamily/HAD-like"/>
    <property type="match status" value="2"/>
</dbReference>
<dbReference type="InterPro" id="IPR050582">
    <property type="entry name" value="HAD-like_SerB"/>
</dbReference>
<dbReference type="InterPro" id="IPR036412">
    <property type="entry name" value="HAD-like_sf"/>
</dbReference>
<dbReference type="InterPro" id="IPR023214">
    <property type="entry name" value="HAD_sf"/>
</dbReference>
<dbReference type="InterPro" id="IPR004469">
    <property type="entry name" value="PSP"/>
</dbReference>
<dbReference type="NCBIfam" id="TIGR01488">
    <property type="entry name" value="HAD-SF-IB"/>
    <property type="match status" value="1"/>
</dbReference>
<dbReference type="NCBIfam" id="TIGR00338">
    <property type="entry name" value="serB"/>
    <property type="match status" value="1"/>
</dbReference>
<dbReference type="PANTHER" id="PTHR43344">
    <property type="entry name" value="PHOSPHOSERINE PHOSPHATASE"/>
    <property type="match status" value="1"/>
</dbReference>
<dbReference type="PANTHER" id="PTHR43344:SF2">
    <property type="entry name" value="PHOSPHOSERINE PHOSPHATASE"/>
    <property type="match status" value="1"/>
</dbReference>
<dbReference type="Pfam" id="PF00702">
    <property type="entry name" value="Hydrolase"/>
    <property type="match status" value="1"/>
</dbReference>
<dbReference type="SFLD" id="SFLDG01137">
    <property type="entry name" value="C1.6.1:_Phosphoserine_Phosphat"/>
    <property type="match status" value="1"/>
</dbReference>
<dbReference type="SFLD" id="SFLDS00003">
    <property type="entry name" value="Haloacid_Dehalogenase"/>
    <property type="match status" value="1"/>
</dbReference>
<dbReference type="SUPFAM" id="SSF56784">
    <property type="entry name" value="HAD-like"/>
    <property type="match status" value="1"/>
</dbReference>
<gene>
    <name evidence="3" type="primary">Psph</name>
</gene>
<protein>
    <recommendedName>
        <fullName evidence="1">Phosphoserine phosphatase</fullName>
        <shortName evidence="1">PSP</shortName>
        <shortName evidence="1">PSPase</shortName>
        <ecNumber evidence="1">3.1.3.3</ecNumber>
    </recommendedName>
    <alternativeName>
        <fullName evidence="1">O-phosphoserine phosphohydrolase</fullName>
    </alternativeName>
</protein>
<sequence length="225" mass="25096">MVSHSELRKLFCSADAVCFDVDSTVIREEGIDELAKFCGVEAAVSEMTRRAMGGALPFKDALTQRLALIQPSRDQVQRLLAEHPPHLTPGIRELVSRLQERNVQVFLISGGFRSIVEHVAAKLNIPTTNVFANRLKFYFNGEYAGFDEMQPTAESGGKGKVIRFLKEKFHFKKIIMIGDGATDMEACPPADAFIGFGGNVIRQQVKDNAKWYITDFVELLGELEE</sequence>
<keyword id="KW-0007">Acetylation</keyword>
<keyword id="KW-0028">Amino-acid biosynthesis</keyword>
<keyword id="KW-0963">Cytoplasm</keyword>
<keyword id="KW-0378">Hydrolase</keyword>
<keyword id="KW-0460">Magnesium</keyword>
<keyword id="KW-0479">Metal-binding</keyword>
<keyword id="KW-1185">Reference proteome</keyword>
<keyword id="KW-0718">Serine biosynthesis</keyword>
<organism>
    <name type="scientific">Mus musculus</name>
    <name type="common">Mouse</name>
    <dbReference type="NCBI Taxonomy" id="10090"/>
    <lineage>
        <taxon>Eukaryota</taxon>
        <taxon>Metazoa</taxon>
        <taxon>Chordata</taxon>
        <taxon>Craniata</taxon>
        <taxon>Vertebrata</taxon>
        <taxon>Euteleostomi</taxon>
        <taxon>Mammalia</taxon>
        <taxon>Eutheria</taxon>
        <taxon>Euarchontoglires</taxon>
        <taxon>Glires</taxon>
        <taxon>Rodentia</taxon>
        <taxon>Myomorpha</taxon>
        <taxon>Muroidea</taxon>
        <taxon>Muridae</taxon>
        <taxon>Murinae</taxon>
        <taxon>Mus</taxon>
        <taxon>Mus</taxon>
    </lineage>
</organism>
<name>SERB_MOUSE</name>
<comment type="function">
    <text evidence="1">Catalyzes the last irreversible step in the biosynthesis of L-serine from carbohydrates, the dephosphorylation of O-phospho-L-serine to L-serine. L-serine can then be used in protein synthesis, to produce other amino acids, in nucleotide metabolism or in glutathione synthesis, or can be racemized to D-serine, a neuromodulator. May also act on O-phospho-D-serine.</text>
</comment>
<comment type="catalytic activity">
    <reaction evidence="1">
        <text>O-phospho-L-serine + H2O = L-serine + phosphate</text>
        <dbReference type="Rhea" id="RHEA:21208"/>
        <dbReference type="ChEBI" id="CHEBI:15377"/>
        <dbReference type="ChEBI" id="CHEBI:33384"/>
        <dbReference type="ChEBI" id="CHEBI:43474"/>
        <dbReference type="ChEBI" id="CHEBI:57524"/>
        <dbReference type="EC" id="3.1.3.3"/>
    </reaction>
    <physiologicalReaction direction="left-to-right" evidence="1">
        <dbReference type="Rhea" id="RHEA:21209"/>
    </physiologicalReaction>
</comment>
<comment type="catalytic activity">
    <reaction evidence="1">
        <text>O-phospho-D-serine + H2O = D-serine + phosphate</text>
        <dbReference type="Rhea" id="RHEA:24873"/>
        <dbReference type="ChEBI" id="CHEBI:15377"/>
        <dbReference type="ChEBI" id="CHEBI:35247"/>
        <dbReference type="ChEBI" id="CHEBI:43474"/>
        <dbReference type="ChEBI" id="CHEBI:58680"/>
        <dbReference type="EC" id="3.1.3.3"/>
    </reaction>
    <physiologicalReaction direction="left-to-right" evidence="1">
        <dbReference type="Rhea" id="RHEA:24874"/>
    </physiologicalReaction>
</comment>
<comment type="cofactor">
    <cofactor evidence="1">
        <name>Mg(2+)</name>
        <dbReference type="ChEBI" id="CHEBI:18420"/>
    </cofactor>
    <text evidence="1">Binds 1 Mg(2+) ion per subunit.</text>
</comment>
<comment type="pathway">
    <text evidence="1">Amino-acid biosynthesis; L-serine biosynthesis; L-serine from 3-phospho-D-glycerate: step 3/3.</text>
</comment>
<comment type="subunit">
    <text evidence="1">Homodimer.</text>
</comment>
<comment type="subcellular location">
    <subcellularLocation>
        <location evidence="1">Cytoplasm</location>
        <location evidence="1">Cytosol</location>
    </subcellularLocation>
</comment>
<comment type="similarity">
    <text evidence="2">Belongs to the HAD-like hydrolase superfamily. SerB family.</text>
</comment>
<feature type="chain" id="PRO_0000156880" description="Phosphoserine phosphatase">
    <location>
        <begin position="1"/>
        <end position="225"/>
    </location>
</feature>
<feature type="active site" description="Nucleophile" evidence="1">
    <location>
        <position position="20"/>
    </location>
</feature>
<feature type="active site" description="Proton donor" evidence="1">
    <location>
        <position position="22"/>
    </location>
</feature>
<feature type="binding site" evidence="1">
    <location>
        <begin position="20"/>
        <end position="22"/>
    </location>
    <ligand>
        <name>L-serine</name>
        <dbReference type="ChEBI" id="CHEBI:33384"/>
    </ligand>
</feature>
<feature type="binding site" evidence="1">
    <location>
        <position position="20"/>
    </location>
    <ligand>
        <name>Mg(2+)</name>
        <dbReference type="ChEBI" id="CHEBI:18420"/>
    </ligand>
</feature>
<feature type="binding site" evidence="1">
    <location>
        <position position="22"/>
    </location>
    <ligand>
        <name>Mg(2+)</name>
        <dbReference type="ChEBI" id="CHEBI:18420"/>
    </ligand>
</feature>
<feature type="binding site" evidence="1">
    <location>
        <position position="52"/>
    </location>
    <ligand>
        <name>O-phospho-L-serine</name>
        <dbReference type="ChEBI" id="CHEBI:57524"/>
    </ligand>
</feature>
<feature type="binding site" evidence="1">
    <location>
        <position position="53"/>
    </location>
    <ligand>
        <name>phosphate</name>
        <dbReference type="ChEBI" id="CHEBI:43474"/>
    </ligand>
</feature>
<feature type="binding site" evidence="1">
    <location>
        <begin position="109"/>
        <end position="111"/>
    </location>
    <ligand>
        <name>L-serine</name>
        <dbReference type="ChEBI" id="CHEBI:33384"/>
    </ligand>
</feature>
<feature type="binding site" evidence="1">
    <location>
        <begin position="109"/>
        <end position="111"/>
    </location>
    <ligand>
        <name>O-phospho-L-serine</name>
        <dbReference type="ChEBI" id="CHEBI:57524"/>
    </ligand>
</feature>
<feature type="binding site" evidence="1">
    <location>
        <position position="158"/>
    </location>
    <ligand>
        <name>L-serine</name>
        <dbReference type="ChEBI" id="CHEBI:33384"/>
    </ligand>
</feature>
<feature type="binding site" evidence="1">
    <location>
        <position position="158"/>
    </location>
    <ligand>
        <name>O-phospho-L-serine</name>
        <dbReference type="ChEBI" id="CHEBI:57524"/>
    </ligand>
</feature>
<feature type="binding site" evidence="1">
    <location>
        <position position="179"/>
    </location>
    <ligand>
        <name>Mg(2+)</name>
        <dbReference type="ChEBI" id="CHEBI:18420"/>
    </ligand>
</feature>
<feature type="binding site" evidence="1">
    <location>
        <position position="182"/>
    </location>
    <ligand>
        <name>O-phospho-L-serine</name>
        <dbReference type="ChEBI" id="CHEBI:57524"/>
    </ligand>
</feature>
<feature type="binding site" evidence="1">
    <location>
        <position position="182"/>
    </location>
    <ligand>
        <name>phosphate</name>
        <dbReference type="ChEBI" id="CHEBI:43474"/>
    </ligand>
</feature>
<feature type="modified residue" description="N-acetylmethionine" evidence="1">
    <location>
        <position position="1"/>
    </location>
</feature>
<proteinExistence type="evidence at protein level"/>
<evidence type="ECO:0000250" key="1">
    <source>
        <dbReference type="UniProtKB" id="P78330"/>
    </source>
</evidence>
<evidence type="ECO:0000305" key="2"/>
<evidence type="ECO:0000312" key="3">
    <source>
        <dbReference type="MGI" id="MGI:97788"/>
    </source>
</evidence>
<reference key="1">
    <citation type="journal article" date="2005" name="Science">
        <title>The transcriptional landscape of the mammalian genome.</title>
        <authorList>
            <person name="Carninci P."/>
            <person name="Kasukawa T."/>
            <person name="Katayama S."/>
            <person name="Gough J."/>
            <person name="Frith M.C."/>
            <person name="Maeda N."/>
            <person name="Oyama R."/>
            <person name="Ravasi T."/>
            <person name="Lenhard B."/>
            <person name="Wells C."/>
            <person name="Kodzius R."/>
            <person name="Shimokawa K."/>
            <person name="Bajic V.B."/>
            <person name="Brenner S.E."/>
            <person name="Batalov S."/>
            <person name="Forrest A.R."/>
            <person name="Zavolan M."/>
            <person name="Davis M.J."/>
            <person name="Wilming L.G."/>
            <person name="Aidinis V."/>
            <person name="Allen J.E."/>
            <person name="Ambesi-Impiombato A."/>
            <person name="Apweiler R."/>
            <person name="Aturaliya R.N."/>
            <person name="Bailey T.L."/>
            <person name="Bansal M."/>
            <person name="Baxter L."/>
            <person name="Beisel K.W."/>
            <person name="Bersano T."/>
            <person name="Bono H."/>
            <person name="Chalk A.M."/>
            <person name="Chiu K.P."/>
            <person name="Choudhary V."/>
            <person name="Christoffels A."/>
            <person name="Clutterbuck D.R."/>
            <person name="Crowe M.L."/>
            <person name="Dalla E."/>
            <person name="Dalrymple B.P."/>
            <person name="de Bono B."/>
            <person name="Della Gatta G."/>
            <person name="di Bernardo D."/>
            <person name="Down T."/>
            <person name="Engstrom P."/>
            <person name="Fagiolini M."/>
            <person name="Faulkner G."/>
            <person name="Fletcher C.F."/>
            <person name="Fukushima T."/>
            <person name="Furuno M."/>
            <person name="Futaki S."/>
            <person name="Gariboldi M."/>
            <person name="Georgii-Hemming P."/>
            <person name="Gingeras T.R."/>
            <person name="Gojobori T."/>
            <person name="Green R.E."/>
            <person name="Gustincich S."/>
            <person name="Harbers M."/>
            <person name="Hayashi Y."/>
            <person name="Hensch T.K."/>
            <person name="Hirokawa N."/>
            <person name="Hill D."/>
            <person name="Huminiecki L."/>
            <person name="Iacono M."/>
            <person name="Ikeo K."/>
            <person name="Iwama A."/>
            <person name="Ishikawa T."/>
            <person name="Jakt M."/>
            <person name="Kanapin A."/>
            <person name="Katoh M."/>
            <person name="Kawasawa Y."/>
            <person name="Kelso J."/>
            <person name="Kitamura H."/>
            <person name="Kitano H."/>
            <person name="Kollias G."/>
            <person name="Krishnan S.P."/>
            <person name="Kruger A."/>
            <person name="Kummerfeld S.K."/>
            <person name="Kurochkin I.V."/>
            <person name="Lareau L.F."/>
            <person name="Lazarevic D."/>
            <person name="Lipovich L."/>
            <person name="Liu J."/>
            <person name="Liuni S."/>
            <person name="McWilliam S."/>
            <person name="Madan Babu M."/>
            <person name="Madera M."/>
            <person name="Marchionni L."/>
            <person name="Matsuda H."/>
            <person name="Matsuzawa S."/>
            <person name="Miki H."/>
            <person name="Mignone F."/>
            <person name="Miyake S."/>
            <person name="Morris K."/>
            <person name="Mottagui-Tabar S."/>
            <person name="Mulder N."/>
            <person name="Nakano N."/>
            <person name="Nakauchi H."/>
            <person name="Ng P."/>
            <person name="Nilsson R."/>
            <person name="Nishiguchi S."/>
            <person name="Nishikawa S."/>
            <person name="Nori F."/>
            <person name="Ohara O."/>
            <person name="Okazaki Y."/>
            <person name="Orlando V."/>
            <person name="Pang K.C."/>
            <person name="Pavan W.J."/>
            <person name="Pavesi G."/>
            <person name="Pesole G."/>
            <person name="Petrovsky N."/>
            <person name="Piazza S."/>
            <person name="Reed J."/>
            <person name="Reid J.F."/>
            <person name="Ring B.Z."/>
            <person name="Ringwald M."/>
            <person name="Rost B."/>
            <person name="Ruan Y."/>
            <person name="Salzberg S.L."/>
            <person name="Sandelin A."/>
            <person name="Schneider C."/>
            <person name="Schoenbach C."/>
            <person name="Sekiguchi K."/>
            <person name="Semple C.A."/>
            <person name="Seno S."/>
            <person name="Sessa L."/>
            <person name="Sheng Y."/>
            <person name="Shibata Y."/>
            <person name="Shimada H."/>
            <person name="Shimada K."/>
            <person name="Silva D."/>
            <person name="Sinclair B."/>
            <person name="Sperling S."/>
            <person name="Stupka E."/>
            <person name="Sugiura K."/>
            <person name="Sultana R."/>
            <person name="Takenaka Y."/>
            <person name="Taki K."/>
            <person name="Tammoja K."/>
            <person name="Tan S.L."/>
            <person name="Tang S."/>
            <person name="Taylor M.S."/>
            <person name="Tegner J."/>
            <person name="Teichmann S.A."/>
            <person name="Ueda H.R."/>
            <person name="van Nimwegen E."/>
            <person name="Verardo R."/>
            <person name="Wei C.L."/>
            <person name="Yagi K."/>
            <person name="Yamanishi H."/>
            <person name="Zabarovsky E."/>
            <person name="Zhu S."/>
            <person name="Zimmer A."/>
            <person name="Hide W."/>
            <person name="Bult C."/>
            <person name="Grimmond S.M."/>
            <person name="Teasdale R.D."/>
            <person name="Liu E.T."/>
            <person name="Brusic V."/>
            <person name="Quackenbush J."/>
            <person name="Wahlestedt C."/>
            <person name="Mattick J.S."/>
            <person name="Hume D.A."/>
            <person name="Kai C."/>
            <person name="Sasaki D."/>
            <person name="Tomaru Y."/>
            <person name="Fukuda S."/>
            <person name="Kanamori-Katayama M."/>
            <person name="Suzuki M."/>
            <person name="Aoki J."/>
            <person name="Arakawa T."/>
            <person name="Iida J."/>
            <person name="Imamura K."/>
            <person name="Itoh M."/>
            <person name="Kato T."/>
            <person name="Kawaji H."/>
            <person name="Kawagashira N."/>
            <person name="Kawashima T."/>
            <person name="Kojima M."/>
            <person name="Kondo S."/>
            <person name="Konno H."/>
            <person name="Nakano K."/>
            <person name="Ninomiya N."/>
            <person name="Nishio T."/>
            <person name="Okada M."/>
            <person name="Plessy C."/>
            <person name="Shibata K."/>
            <person name="Shiraki T."/>
            <person name="Suzuki S."/>
            <person name="Tagami M."/>
            <person name="Waki K."/>
            <person name="Watahiki A."/>
            <person name="Okamura-Oho Y."/>
            <person name="Suzuki H."/>
            <person name="Kawai J."/>
            <person name="Hayashizaki Y."/>
        </authorList>
    </citation>
    <scope>NUCLEOTIDE SEQUENCE [LARGE SCALE MRNA]</scope>
    <source>
        <strain>BALB/cJ</strain>
        <strain>NOD</strain>
        <tissue>Thymus</tissue>
    </source>
</reference>
<reference key="2">
    <citation type="journal article" date="2004" name="Genome Res.">
        <title>The status, quality, and expansion of the NIH full-length cDNA project: the Mammalian Gene Collection (MGC).</title>
        <authorList>
            <consortium name="The MGC Project Team"/>
        </authorList>
    </citation>
    <scope>NUCLEOTIDE SEQUENCE [LARGE SCALE MRNA]</scope>
    <source>
        <strain>Czech II</strain>
        <tissue>Mammary tumor</tissue>
    </source>
</reference>
<reference key="3">
    <citation type="journal article" date="2010" name="Cell">
        <title>A tissue-specific atlas of mouse protein phosphorylation and expression.</title>
        <authorList>
            <person name="Huttlin E.L."/>
            <person name="Jedrychowski M.P."/>
            <person name="Elias J.E."/>
            <person name="Goswami T."/>
            <person name="Rad R."/>
            <person name="Beausoleil S.A."/>
            <person name="Villen J."/>
            <person name="Haas W."/>
            <person name="Sowa M.E."/>
            <person name="Gygi S.P."/>
        </authorList>
    </citation>
    <scope>IDENTIFICATION BY MASS SPECTROMETRY [LARGE SCALE ANALYSIS]</scope>
    <source>
        <tissue>Brain</tissue>
        <tissue>Brown adipose tissue</tissue>
        <tissue>Kidney</tissue>
        <tissue>Liver</tissue>
        <tissue>Lung</tissue>
        <tissue>Pancreas</tissue>
        <tissue>Testis</tissue>
    </source>
</reference>
<accession>Q99LS3</accession>
<accession>Q3TI16</accession>
<accession>Q5XHW3</accession>